<accession>Q8ZH68</accession>
<accession>Q0WI03</accession>
<evidence type="ECO:0000255" key="1">
    <source>
        <dbReference type="HAMAP-Rule" id="MF_00277"/>
    </source>
</evidence>
<evidence type="ECO:0000255" key="2">
    <source>
        <dbReference type="PROSITE-ProRule" id="PRU01175"/>
    </source>
</evidence>
<evidence type="ECO:0000305" key="3"/>
<reference key="1">
    <citation type="journal article" date="2001" name="Nature">
        <title>Genome sequence of Yersinia pestis, the causative agent of plague.</title>
        <authorList>
            <person name="Parkhill J."/>
            <person name="Wren B.W."/>
            <person name="Thomson N.R."/>
            <person name="Titball R.W."/>
            <person name="Holden M.T.G."/>
            <person name="Prentice M.B."/>
            <person name="Sebaihia M."/>
            <person name="James K.D."/>
            <person name="Churcher C.M."/>
            <person name="Mungall K.L."/>
            <person name="Baker S."/>
            <person name="Basham D."/>
            <person name="Bentley S.D."/>
            <person name="Brooks K."/>
            <person name="Cerdeno-Tarraga A.-M."/>
            <person name="Chillingworth T."/>
            <person name="Cronin A."/>
            <person name="Davies R.M."/>
            <person name="Davis P."/>
            <person name="Dougan G."/>
            <person name="Feltwell T."/>
            <person name="Hamlin N."/>
            <person name="Holroyd S."/>
            <person name="Jagels K."/>
            <person name="Karlyshev A.V."/>
            <person name="Leather S."/>
            <person name="Moule S."/>
            <person name="Oyston P.C.F."/>
            <person name="Quail M.A."/>
            <person name="Rutherford K.M."/>
            <person name="Simmonds M."/>
            <person name="Skelton J."/>
            <person name="Stevens K."/>
            <person name="Whitehead S."/>
            <person name="Barrell B.G."/>
        </authorList>
    </citation>
    <scope>NUCLEOTIDE SEQUENCE [LARGE SCALE GENOMIC DNA]</scope>
    <source>
        <strain>CO-92 / Biovar Orientalis</strain>
    </source>
</reference>
<reference key="2">
    <citation type="journal article" date="2002" name="J. Bacteriol.">
        <title>Genome sequence of Yersinia pestis KIM.</title>
        <authorList>
            <person name="Deng W."/>
            <person name="Burland V."/>
            <person name="Plunkett G. III"/>
            <person name="Boutin A."/>
            <person name="Mayhew G.F."/>
            <person name="Liss P."/>
            <person name="Perna N.T."/>
            <person name="Rose D.J."/>
            <person name="Mau B."/>
            <person name="Zhou S."/>
            <person name="Schwartz D.C."/>
            <person name="Fetherston J.D."/>
            <person name="Lindler L.E."/>
            <person name="Brubaker R.R."/>
            <person name="Plano G.V."/>
            <person name="Straley S.C."/>
            <person name="McDonough K.A."/>
            <person name="Nilles M.L."/>
            <person name="Matson J.S."/>
            <person name="Blattner F.R."/>
            <person name="Perry R.D."/>
        </authorList>
    </citation>
    <scope>NUCLEOTIDE SEQUENCE [LARGE SCALE GENOMIC DNA]</scope>
    <source>
        <strain>KIM10+ / Biovar Mediaevalis</strain>
    </source>
</reference>
<reference key="3">
    <citation type="journal article" date="2004" name="DNA Res.">
        <title>Complete genome sequence of Yersinia pestis strain 91001, an isolate avirulent to humans.</title>
        <authorList>
            <person name="Song Y."/>
            <person name="Tong Z."/>
            <person name="Wang J."/>
            <person name="Wang L."/>
            <person name="Guo Z."/>
            <person name="Han Y."/>
            <person name="Zhang J."/>
            <person name="Pei D."/>
            <person name="Zhou D."/>
            <person name="Qin H."/>
            <person name="Pang X."/>
            <person name="Han Y."/>
            <person name="Zhai J."/>
            <person name="Li M."/>
            <person name="Cui B."/>
            <person name="Qi Z."/>
            <person name="Jin L."/>
            <person name="Dai R."/>
            <person name="Chen F."/>
            <person name="Li S."/>
            <person name="Ye C."/>
            <person name="Du Z."/>
            <person name="Lin W."/>
            <person name="Wang J."/>
            <person name="Yu J."/>
            <person name="Yang H."/>
            <person name="Wang J."/>
            <person name="Huang P."/>
            <person name="Yang R."/>
        </authorList>
    </citation>
    <scope>NUCLEOTIDE SEQUENCE [LARGE SCALE GENOMIC DNA]</scope>
    <source>
        <strain>91001 / Biovar Mediaevalis</strain>
    </source>
</reference>
<feature type="chain" id="PRO_0000192780" description="Bifunctional uridylyltransferase/uridylyl-removing enzyme">
    <location>
        <begin position="1"/>
        <end position="893"/>
    </location>
</feature>
<feature type="domain" description="HD" evidence="2">
    <location>
        <begin position="470"/>
        <end position="592"/>
    </location>
</feature>
<feature type="domain" description="ACT 1" evidence="1">
    <location>
        <begin position="711"/>
        <end position="793"/>
    </location>
</feature>
<feature type="domain" description="ACT 2" evidence="1">
    <location>
        <begin position="819"/>
        <end position="893"/>
    </location>
</feature>
<feature type="region of interest" description="Uridylyltransferase">
    <location>
        <begin position="1"/>
        <end position="351"/>
    </location>
</feature>
<feature type="region of interest" description="Uridylyl-removing">
    <location>
        <begin position="352"/>
        <end position="710"/>
    </location>
</feature>
<comment type="function">
    <text evidence="1">Modifies, by uridylylation and deuridylylation, the PII regulatory proteins (GlnB and homologs), in response to the nitrogen status of the cell that GlnD senses through the glutamine level. Under low glutamine levels, catalyzes the conversion of the PII proteins and UTP to PII-UMP and PPi, while under higher glutamine levels, GlnD hydrolyzes PII-UMP to PII and UMP (deuridylylation). Thus, controls uridylylation state and activity of the PII proteins, and plays an important role in the regulation of nitrogen assimilation and metabolism.</text>
</comment>
<comment type="catalytic activity">
    <reaction evidence="1">
        <text>[protein-PII]-L-tyrosine + UTP = [protein-PII]-uridylyl-L-tyrosine + diphosphate</text>
        <dbReference type="Rhea" id="RHEA:13673"/>
        <dbReference type="Rhea" id="RHEA-COMP:12147"/>
        <dbReference type="Rhea" id="RHEA-COMP:12148"/>
        <dbReference type="ChEBI" id="CHEBI:33019"/>
        <dbReference type="ChEBI" id="CHEBI:46398"/>
        <dbReference type="ChEBI" id="CHEBI:46858"/>
        <dbReference type="ChEBI" id="CHEBI:90602"/>
        <dbReference type="EC" id="2.7.7.59"/>
    </reaction>
</comment>
<comment type="catalytic activity">
    <reaction evidence="1">
        <text>[protein-PII]-uridylyl-L-tyrosine + H2O = [protein-PII]-L-tyrosine + UMP + H(+)</text>
        <dbReference type="Rhea" id="RHEA:48600"/>
        <dbReference type="Rhea" id="RHEA-COMP:12147"/>
        <dbReference type="Rhea" id="RHEA-COMP:12148"/>
        <dbReference type="ChEBI" id="CHEBI:15377"/>
        <dbReference type="ChEBI" id="CHEBI:15378"/>
        <dbReference type="ChEBI" id="CHEBI:46858"/>
        <dbReference type="ChEBI" id="CHEBI:57865"/>
        <dbReference type="ChEBI" id="CHEBI:90602"/>
    </reaction>
</comment>
<comment type="cofactor">
    <cofactor evidence="1">
        <name>Mg(2+)</name>
        <dbReference type="ChEBI" id="CHEBI:18420"/>
    </cofactor>
</comment>
<comment type="activity regulation">
    <text evidence="1">Uridylyltransferase (UTase) activity is inhibited by glutamine, while glutamine activates uridylyl-removing (UR) activity.</text>
</comment>
<comment type="domain">
    <text evidence="1">Has four distinct domains: an N-terminal nucleotidyltransferase (NT) domain responsible for UTase activity, a central HD domain that encodes UR activity, and two C-terminal ACT domains that seem to have a role in glutamine sensing.</text>
</comment>
<comment type="similarity">
    <text evidence="1">Belongs to the GlnD family.</text>
</comment>
<comment type="sequence caution" evidence="3">
    <conflict type="erroneous initiation">
        <sequence resource="EMBL-CDS" id="AAM86689"/>
    </conflict>
</comment>
<comment type="sequence caution" evidence="3">
    <conflict type="erroneous initiation">
        <sequence resource="EMBL-CDS" id="AAS62993"/>
    </conflict>
</comment>
<comment type="sequence caution" evidence="3">
    <conflict type="erroneous initiation">
        <sequence resource="EMBL-CDS" id="CAL19707"/>
    </conflict>
</comment>
<protein>
    <recommendedName>
        <fullName evidence="1">Bifunctional uridylyltransferase/uridylyl-removing enzyme</fullName>
        <shortName evidence="1">UTase/UR</shortName>
    </recommendedName>
    <alternativeName>
        <fullName evidence="1">Bifunctional [protein-PII] modification enzyme</fullName>
    </alternativeName>
    <alternativeName>
        <fullName evidence="1">Bifunctional nitrogen sensor protein</fullName>
    </alternativeName>
    <domain>
        <recommendedName>
            <fullName evidence="1">[Protein-PII] uridylyltransferase</fullName>
            <shortName evidence="1">PII uridylyltransferase</shortName>
            <shortName evidence="1">UTase</shortName>
            <ecNumber evidence="1">2.7.7.59</ecNumber>
        </recommendedName>
    </domain>
    <domain>
        <recommendedName>
            <fullName evidence="1">[Protein-PII]-UMP uridylyl-removing enzyme</fullName>
            <shortName evidence="1">UR</shortName>
            <ecNumber evidence="1">3.1.4.-</ecNumber>
        </recommendedName>
    </domain>
</protein>
<dbReference type="EC" id="2.7.7.59" evidence="1"/>
<dbReference type="EC" id="3.1.4.-" evidence="1"/>
<dbReference type="EMBL" id="AL590842">
    <property type="protein sequence ID" value="CAL19707.1"/>
    <property type="status" value="ALT_INIT"/>
    <property type="molecule type" value="Genomic_DNA"/>
</dbReference>
<dbReference type="EMBL" id="AE009952">
    <property type="protein sequence ID" value="AAM86689.1"/>
    <property type="status" value="ALT_INIT"/>
    <property type="molecule type" value="Genomic_DNA"/>
</dbReference>
<dbReference type="EMBL" id="AE017042">
    <property type="protein sequence ID" value="AAS62993.1"/>
    <property type="status" value="ALT_INIT"/>
    <property type="molecule type" value="Genomic_DNA"/>
</dbReference>
<dbReference type="PIR" id="AI0127">
    <property type="entry name" value="AI0127"/>
</dbReference>
<dbReference type="RefSeq" id="WP_002212129.1">
    <property type="nucleotide sequence ID" value="NZ_WUCM01000044.1"/>
</dbReference>
<dbReference type="RefSeq" id="YP_002346085.1">
    <property type="nucleotide sequence ID" value="NC_003143.1"/>
</dbReference>
<dbReference type="SMR" id="Q8ZH68"/>
<dbReference type="STRING" id="214092.YPO1042"/>
<dbReference type="PaxDb" id="214092-YPO1042"/>
<dbReference type="DNASU" id="1148086"/>
<dbReference type="EnsemblBacteria" id="AAS62993">
    <property type="protein sequence ID" value="AAS62993"/>
    <property type="gene ID" value="YP_2809"/>
</dbReference>
<dbReference type="GeneID" id="57977519"/>
<dbReference type="KEGG" id="ype:YPO1042"/>
<dbReference type="KEGG" id="ypj:CH55_3792"/>
<dbReference type="KEGG" id="ypk:y3139"/>
<dbReference type="KEGG" id="ypl:CH46_4102"/>
<dbReference type="KEGG" id="ypm:YP_2809"/>
<dbReference type="KEGG" id="ypv:BZ15_2528"/>
<dbReference type="KEGG" id="ypw:CH59_817"/>
<dbReference type="PATRIC" id="fig|214092.21.peg.1330"/>
<dbReference type="eggNOG" id="COG2844">
    <property type="taxonomic scope" value="Bacteria"/>
</dbReference>
<dbReference type="HOGENOM" id="CLU_012833_0_0_6"/>
<dbReference type="OMA" id="GLMQFDL"/>
<dbReference type="Proteomes" id="UP000000815">
    <property type="component" value="Chromosome"/>
</dbReference>
<dbReference type="Proteomes" id="UP000001019">
    <property type="component" value="Chromosome"/>
</dbReference>
<dbReference type="Proteomes" id="UP000002490">
    <property type="component" value="Chromosome"/>
</dbReference>
<dbReference type="GO" id="GO:0008773">
    <property type="term" value="F:[protein-PII] uridylyltransferase activity"/>
    <property type="evidence" value="ECO:0000318"/>
    <property type="project" value="GO_Central"/>
</dbReference>
<dbReference type="GO" id="GO:0008081">
    <property type="term" value="F:phosphoric diester hydrolase activity"/>
    <property type="evidence" value="ECO:0007669"/>
    <property type="project" value="UniProtKB-UniRule"/>
</dbReference>
<dbReference type="GO" id="GO:0006808">
    <property type="term" value="P:regulation of nitrogen utilization"/>
    <property type="evidence" value="ECO:0007669"/>
    <property type="project" value="UniProtKB-UniRule"/>
</dbReference>
<dbReference type="CDD" id="cd04899">
    <property type="entry name" value="ACT_ACR-UUR-like_2"/>
    <property type="match status" value="1"/>
</dbReference>
<dbReference type="CDD" id="cd04900">
    <property type="entry name" value="ACT_UUR-like_1"/>
    <property type="match status" value="1"/>
</dbReference>
<dbReference type="CDD" id="cd00077">
    <property type="entry name" value="HDc"/>
    <property type="match status" value="1"/>
</dbReference>
<dbReference type="CDD" id="cd05401">
    <property type="entry name" value="NT_GlnE_GlnD_like"/>
    <property type="match status" value="1"/>
</dbReference>
<dbReference type="FunFam" id="1.10.3210.10:FF:000005">
    <property type="entry name" value="Bifunctional uridylyltransferase/uridylyl-removing enzyme"/>
    <property type="match status" value="1"/>
</dbReference>
<dbReference type="Gene3D" id="1.10.3210.10">
    <property type="entry name" value="Hypothetical protein af1432"/>
    <property type="match status" value="1"/>
</dbReference>
<dbReference type="HAMAP" id="MF_00277">
    <property type="entry name" value="PII_uridylyl_transf"/>
    <property type="match status" value="1"/>
</dbReference>
<dbReference type="InterPro" id="IPR045865">
    <property type="entry name" value="ACT-like_dom_sf"/>
</dbReference>
<dbReference type="InterPro" id="IPR002912">
    <property type="entry name" value="ACT_dom"/>
</dbReference>
<dbReference type="InterPro" id="IPR003607">
    <property type="entry name" value="HD/PDEase_dom"/>
</dbReference>
<dbReference type="InterPro" id="IPR006674">
    <property type="entry name" value="HD_domain"/>
</dbReference>
<dbReference type="InterPro" id="IPR043519">
    <property type="entry name" value="NT_sf"/>
</dbReference>
<dbReference type="InterPro" id="IPR013546">
    <property type="entry name" value="PII_UdlTrfase/GS_AdlTrfase"/>
</dbReference>
<dbReference type="InterPro" id="IPR002934">
    <property type="entry name" value="Polymerase_NTP_transf_dom"/>
</dbReference>
<dbReference type="InterPro" id="IPR010043">
    <property type="entry name" value="UTase/UR"/>
</dbReference>
<dbReference type="NCBIfam" id="NF002487">
    <property type="entry name" value="PRK01759.1"/>
    <property type="match status" value="1"/>
</dbReference>
<dbReference type="NCBIfam" id="NF003448">
    <property type="entry name" value="PRK05007.1"/>
    <property type="match status" value="1"/>
</dbReference>
<dbReference type="NCBIfam" id="TIGR01693">
    <property type="entry name" value="UTase_glnD"/>
    <property type="match status" value="1"/>
</dbReference>
<dbReference type="PANTHER" id="PTHR47320">
    <property type="entry name" value="BIFUNCTIONAL URIDYLYLTRANSFERASE/URIDYLYL-REMOVING ENZYME"/>
    <property type="match status" value="1"/>
</dbReference>
<dbReference type="PANTHER" id="PTHR47320:SF1">
    <property type="entry name" value="BIFUNCTIONAL URIDYLYLTRANSFERASE_URIDYLYL-REMOVING ENZYME"/>
    <property type="match status" value="1"/>
</dbReference>
<dbReference type="Pfam" id="PF01842">
    <property type="entry name" value="ACT"/>
    <property type="match status" value="1"/>
</dbReference>
<dbReference type="Pfam" id="PF08335">
    <property type="entry name" value="GlnD_UR_UTase"/>
    <property type="match status" value="1"/>
</dbReference>
<dbReference type="Pfam" id="PF01966">
    <property type="entry name" value="HD"/>
    <property type="match status" value="1"/>
</dbReference>
<dbReference type="Pfam" id="PF01909">
    <property type="entry name" value="NTP_transf_2"/>
    <property type="match status" value="1"/>
</dbReference>
<dbReference type="PIRSF" id="PIRSF006288">
    <property type="entry name" value="PII_uridyltransf"/>
    <property type="match status" value="1"/>
</dbReference>
<dbReference type="SMART" id="SM00471">
    <property type="entry name" value="HDc"/>
    <property type="match status" value="1"/>
</dbReference>
<dbReference type="SUPFAM" id="SSF55021">
    <property type="entry name" value="ACT-like"/>
    <property type="match status" value="2"/>
</dbReference>
<dbReference type="SUPFAM" id="SSF109604">
    <property type="entry name" value="HD-domain/PDEase-like"/>
    <property type="match status" value="1"/>
</dbReference>
<dbReference type="SUPFAM" id="SSF81301">
    <property type="entry name" value="Nucleotidyltransferase"/>
    <property type="match status" value="1"/>
</dbReference>
<dbReference type="SUPFAM" id="SSF81593">
    <property type="entry name" value="Nucleotidyltransferase substrate binding subunit/domain"/>
    <property type="match status" value="1"/>
</dbReference>
<dbReference type="SUPFAM" id="SSF81891">
    <property type="entry name" value="Poly A polymerase C-terminal region-like"/>
    <property type="match status" value="1"/>
</dbReference>
<dbReference type="PROSITE" id="PS51671">
    <property type="entry name" value="ACT"/>
    <property type="match status" value="2"/>
</dbReference>
<dbReference type="PROSITE" id="PS51831">
    <property type="entry name" value="HD"/>
    <property type="match status" value="1"/>
</dbReference>
<name>GLND_YERPE</name>
<sequence>MSDNHTEHSLSLTLTPTISEQPALPSTYLDSDIHCPILKQRLDAFQRWQAEAFNSGTSAEVLIAARSDYIDHLLQRLWTFYGFDKVPETALVAVGGYGRGELHPLSDIDVLVLSKQRLNDEQAQRVGQLITLLWDLKLEVGHSVRTLEECLLEGLADLTIATNMIESRLICGDVALFLQMQKHIFSDSFWPSPQFFHAKVVEQQERHKRYHGTSYNLEPDIKSSPGGLRDIHTLLWVARRHFGATSLSEMVDFGFLTNAERNELNESQSFLWRIRFALHLVLTRYDNRLLFDRQLSVAQLLRYEGEGNEPVEHMMKDFYRMTRRVSELNNMLLQLFDEAILALDANEKPRPLDEEFQLRGDLIDLRDENLFVRQPEAIMRMFYLMVRNQDIKGIYSTTVRRLRHARRHLKAPLCHIPEARKLFMAILRHPGAVSRALLPMHRHSVLWAYMPQWGSIVGQMQFDLFHAYTVDEHTIRVLLKIESFADEDTRPRHPLCVELYPRLPQPELLLLAALFHDIAKGRGGDHSILGAHDAVEFAEQHGLNSRESQLVAWLVRCHLLMSVTAQRRDIQDPAVIQQFSAEVQSETRLRYLVSLTVADICATNENLWNSWKQSLLRELYFATEKQLRRGMQNSPDLRERVRHHRLQALALLRMDNIDEEALHRIWSRCRADYFLRHSPNQLAWHARHLLEHDSTKPLVLVSRQATRGGTEIFIWSPDRPSLFAAVVGELDRRNLSVHDAQIFTNRDGMAMDTFIVLEPDGSPLAQDRHPIISHALQQAINRSDYQHPPRVRRLSPKLRHFSVPTEANFLPTHNERRTYLELIALDQPGLLARVGKIFADLGLSLHSARITTIGERVEDLFVLADKDRRALSLETRRELAQRLADTLNPNDKL</sequence>
<organism>
    <name type="scientific">Yersinia pestis</name>
    <dbReference type="NCBI Taxonomy" id="632"/>
    <lineage>
        <taxon>Bacteria</taxon>
        <taxon>Pseudomonadati</taxon>
        <taxon>Pseudomonadota</taxon>
        <taxon>Gammaproteobacteria</taxon>
        <taxon>Enterobacterales</taxon>
        <taxon>Yersiniaceae</taxon>
        <taxon>Yersinia</taxon>
    </lineage>
</organism>
<keyword id="KW-0378">Hydrolase</keyword>
<keyword id="KW-0460">Magnesium</keyword>
<keyword id="KW-0511">Multifunctional enzyme</keyword>
<keyword id="KW-0548">Nucleotidyltransferase</keyword>
<keyword id="KW-1185">Reference proteome</keyword>
<keyword id="KW-0677">Repeat</keyword>
<keyword id="KW-0808">Transferase</keyword>
<proteinExistence type="inferred from homology"/>
<gene>
    <name evidence="1" type="primary">glnD</name>
    <name type="ordered locus">YPO1042</name>
    <name type="ordered locus">y3139</name>
    <name type="ordered locus">YP_2809</name>
</gene>